<name>NP4_RHOPR</name>
<dbReference type="EC" id="1.7.6.1" evidence="9"/>
<dbReference type="EMBL" id="U70584">
    <property type="protein sequence ID" value="AAB09590.1"/>
    <property type="molecule type" value="mRNA"/>
</dbReference>
<dbReference type="PIR" id="D56385">
    <property type="entry name" value="D56385"/>
</dbReference>
<dbReference type="PDB" id="1D2U">
    <property type="method" value="X-ray"/>
    <property type="resolution" value="1.15 A"/>
    <property type="chains" value="A=22-205"/>
</dbReference>
<dbReference type="PDB" id="1D3S">
    <property type="method" value="X-ray"/>
    <property type="resolution" value="1.40 A"/>
    <property type="chains" value="A=22-205"/>
</dbReference>
<dbReference type="PDB" id="1EQD">
    <property type="method" value="X-ray"/>
    <property type="resolution" value="1.60 A"/>
    <property type="chains" value="A=22-205"/>
</dbReference>
<dbReference type="PDB" id="1ERX">
    <property type="method" value="X-ray"/>
    <property type="resolution" value="1.40 A"/>
    <property type="chains" value="A=22-205"/>
</dbReference>
<dbReference type="PDB" id="1IKE">
    <property type="method" value="X-ray"/>
    <property type="resolution" value="1.50 A"/>
    <property type="chains" value="A=22-205"/>
</dbReference>
<dbReference type="PDB" id="1IKJ">
    <property type="method" value="X-ray"/>
    <property type="resolution" value="1.27 A"/>
    <property type="chains" value="A=22-205"/>
</dbReference>
<dbReference type="PDB" id="1KOI">
    <property type="method" value="X-ray"/>
    <property type="resolution" value="1.08 A"/>
    <property type="chains" value="A=22-205"/>
</dbReference>
<dbReference type="PDB" id="1ML7">
    <property type="method" value="X-ray"/>
    <property type="resolution" value="1.25 A"/>
    <property type="chains" value="A=22-205"/>
</dbReference>
<dbReference type="PDB" id="1NP4">
    <property type="method" value="X-ray"/>
    <property type="resolution" value="1.50 A"/>
    <property type="chains" value="A=22-205"/>
</dbReference>
<dbReference type="PDB" id="1SXU">
    <property type="method" value="X-ray"/>
    <property type="resolution" value="1.40 A"/>
    <property type="chains" value="A=22-205"/>
</dbReference>
<dbReference type="PDB" id="1SXW">
    <property type="method" value="X-ray"/>
    <property type="resolution" value="1.05 A"/>
    <property type="chains" value="A=22-205"/>
</dbReference>
<dbReference type="PDB" id="1SXX">
    <property type="method" value="X-ray"/>
    <property type="resolution" value="1.01 A"/>
    <property type="chains" value="A=22-205"/>
</dbReference>
<dbReference type="PDB" id="1SXY">
    <property type="method" value="X-ray"/>
    <property type="resolution" value="1.07 A"/>
    <property type="chains" value="A=22-205"/>
</dbReference>
<dbReference type="PDB" id="1SY0">
    <property type="method" value="X-ray"/>
    <property type="resolution" value="1.15 A"/>
    <property type="chains" value="A=22-205"/>
</dbReference>
<dbReference type="PDB" id="1SY1">
    <property type="method" value="X-ray"/>
    <property type="resolution" value="1.01 A"/>
    <property type="chains" value="A=22-205"/>
</dbReference>
<dbReference type="PDB" id="1SY2">
    <property type="method" value="X-ray"/>
    <property type="resolution" value="1.00 A"/>
    <property type="chains" value="A=22-205"/>
</dbReference>
<dbReference type="PDB" id="1SY3">
    <property type="method" value="X-ray"/>
    <property type="resolution" value="1.00 A"/>
    <property type="chains" value="A=22-205"/>
</dbReference>
<dbReference type="PDB" id="1U0X">
    <property type="method" value="X-ray"/>
    <property type="resolution" value="1.45 A"/>
    <property type="chains" value="A=22-205"/>
</dbReference>
<dbReference type="PDB" id="1X8N">
    <property type="method" value="X-ray"/>
    <property type="resolution" value="1.08 A"/>
    <property type="chains" value="A=22-205"/>
</dbReference>
<dbReference type="PDB" id="1X8O">
    <property type="method" value="X-ray"/>
    <property type="resolution" value="1.01 A"/>
    <property type="chains" value="A=22-205"/>
</dbReference>
<dbReference type="PDB" id="1X8P">
    <property type="method" value="X-ray"/>
    <property type="resolution" value="0.85 A"/>
    <property type="chains" value="A=22-205"/>
</dbReference>
<dbReference type="PDB" id="1X8Q">
    <property type="method" value="X-ray"/>
    <property type="resolution" value="0.85 A"/>
    <property type="chains" value="A=22-205"/>
</dbReference>
<dbReference type="PDB" id="1YWA">
    <property type="method" value="X-ray"/>
    <property type="resolution" value="0.89 A"/>
    <property type="chains" value="A=22-205"/>
</dbReference>
<dbReference type="PDB" id="1YWB">
    <property type="method" value="X-ray"/>
    <property type="resolution" value="0.97 A"/>
    <property type="chains" value="A=22-205"/>
</dbReference>
<dbReference type="PDB" id="1YWC">
    <property type="method" value="X-ray"/>
    <property type="resolution" value="1.00 A"/>
    <property type="chains" value="A=22-205"/>
</dbReference>
<dbReference type="PDB" id="1YWD">
    <property type="method" value="X-ray"/>
    <property type="resolution" value="1.08 A"/>
    <property type="chains" value="A=22-205"/>
</dbReference>
<dbReference type="PDB" id="2AT0">
    <property type="method" value="X-ray"/>
    <property type="resolution" value="1.00 A"/>
    <property type="chains" value="X=22-205"/>
</dbReference>
<dbReference type="PDB" id="2AT3">
    <property type="method" value="X-ray"/>
    <property type="resolution" value="1.00 A"/>
    <property type="chains" value="X=22-205"/>
</dbReference>
<dbReference type="PDB" id="2AT5">
    <property type="method" value="X-ray"/>
    <property type="resolution" value="1.22 A"/>
    <property type="chains" value="X=22-205"/>
</dbReference>
<dbReference type="PDB" id="2AT6">
    <property type="method" value="X-ray"/>
    <property type="resolution" value="1.22 A"/>
    <property type="chains" value="X=22-205"/>
</dbReference>
<dbReference type="PDB" id="2AT8">
    <property type="method" value="X-ray"/>
    <property type="resolution" value="1.00 A"/>
    <property type="chains" value="X=22-205"/>
</dbReference>
<dbReference type="PDB" id="2OFM">
    <property type="method" value="X-ray"/>
    <property type="resolution" value="1.11 A"/>
    <property type="chains" value="X=22-205"/>
</dbReference>
<dbReference type="PDB" id="2OFR">
    <property type="method" value="X-ray"/>
    <property type="resolution" value="1.00 A"/>
    <property type="chains" value="X=22-205"/>
</dbReference>
<dbReference type="PDB" id="3C76">
    <property type="method" value="X-ray"/>
    <property type="resolution" value="1.07 A"/>
    <property type="chains" value="X=22-205"/>
</dbReference>
<dbReference type="PDB" id="3C77">
    <property type="method" value="X-ray"/>
    <property type="resolution" value="1.08 A"/>
    <property type="chains" value="X=22-205"/>
</dbReference>
<dbReference type="PDB" id="3C78">
    <property type="method" value="X-ray"/>
    <property type="resolution" value="0.98 A"/>
    <property type="chains" value="X=22-205"/>
</dbReference>
<dbReference type="PDB" id="3FLL">
    <property type="method" value="X-ray"/>
    <property type="resolution" value="1.50 A"/>
    <property type="chains" value="A=22-205"/>
</dbReference>
<dbReference type="PDB" id="3MVF">
    <property type="method" value="X-ray"/>
    <property type="resolution" value="1.40 A"/>
    <property type="chains" value="A=22-205"/>
</dbReference>
<dbReference type="PDB" id="3TGA">
    <property type="method" value="X-ray"/>
    <property type="resolution" value="1.30 A"/>
    <property type="chains" value="A=22-205"/>
</dbReference>
<dbReference type="PDB" id="3TGB">
    <property type="method" value="X-ray"/>
    <property type="resolution" value="1.35 A"/>
    <property type="chains" value="A=22-205"/>
</dbReference>
<dbReference type="PDB" id="3TGC">
    <property type="method" value="X-ray"/>
    <property type="resolution" value="1.40 A"/>
    <property type="chains" value="A=22-205"/>
</dbReference>
<dbReference type="PDB" id="4GNW">
    <property type="method" value="X-ray"/>
    <property type="resolution" value="1.15 A"/>
    <property type="chains" value="A/B=22-205"/>
</dbReference>
<dbReference type="PDB" id="4GRJ">
    <property type="method" value="X-ray"/>
    <property type="resolution" value="1.15 A"/>
    <property type="chains" value="A/B=22-205"/>
</dbReference>
<dbReference type="PDB" id="4HPA">
    <property type="method" value="X-ray"/>
    <property type="resolution" value="1.50 A"/>
    <property type="chains" value="A=22-205"/>
</dbReference>
<dbReference type="PDB" id="4HPB">
    <property type="method" value="X-ray"/>
    <property type="resolution" value="1.60 A"/>
    <property type="chains" value="A=22-205"/>
</dbReference>
<dbReference type="PDB" id="4HPC">
    <property type="method" value="X-ray"/>
    <property type="resolution" value="1.40 A"/>
    <property type="chains" value="A=22-205"/>
</dbReference>
<dbReference type="PDB" id="4HPD">
    <property type="method" value="X-ray"/>
    <property type="resolution" value="1.30 A"/>
    <property type="chains" value="A=22-205"/>
</dbReference>
<dbReference type="PDB" id="5HWZ">
    <property type="method" value="X-ray"/>
    <property type="resolution" value="1.45 A"/>
    <property type="chains" value="A=22-205"/>
</dbReference>
<dbReference type="PDBsum" id="1D2U"/>
<dbReference type="PDBsum" id="1D3S"/>
<dbReference type="PDBsum" id="1EQD"/>
<dbReference type="PDBsum" id="1ERX"/>
<dbReference type="PDBsum" id="1IKE"/>
<dbReference type="PDBsum" id="1IKJ"/>
<dbReference type="PDBsum" id="1KOI"/>
<dbReference type="PDBsum" id="1ML7"/>
<dbReference type="PDBsum" id="1NP4"/>
<dbReference type="PDBsum" id="1SXU"/>
<dbReference type="PDBsum" id="1SXW"/>
<dbReference type="PDBsum" id="1SXX"/>
<dbReference type="PDBsum" id="1SXY"/>
<dbReference type="PDBsum" id="1SY0"/>
<dbReference type="PDBsum" id="1SY1"/>
<dbReference type="PDBsum" id="1SY2"/>
<dbReference type="PDBsum" id="1SY3"/>
<dbReference type="PDBsum" id="1U0X"/>
<dbReference type="PDBsum" id="1X8N"/>
<dbReference type="PDBsum" id="1X8O"/>
<dbReference type="PDBsum" id="1X8P"/>
<dbReference type="PDBsum" id="1X8Q"/>
<dbReference type="PDBsum" id="1YWA"/>
<dbReference type="PDBsum" id="1YWB"/>
<dbReference type="PDBsum" id="1YWC"/>
<dbReference type="PDBsum" id="1YWD"/>
<dbReference type="PDBsum" id="2AT0"/>
<dbReference type="PDBsum" id="2AT3"/>
<dbReference type="PDBsum" id="2AT5"/>
<dbReference type="PDBsum" id="2AT6"/>
<dbReference type="PDBsum" id="2AT8"/>
<dbReference type="PDBsum" id="2OFM"/>
<dbReference type="PDBsum" id="2OFR"/>
<dbReference type="PDBsum" id="3C76"/>
<dbReference type="PDBsum" id="3C77"/>
<dbReference type="PDBsum" id="3C78"/>
<dbReference type="PDBsum" id="3FLL"/>
<dbReference type="PDBsum" id="3MVF"/>
<dbReference type="PDBsum" id="3TGA"/>
<dbReference type="PDBsum" id="3TGB"/>
<dbReference type="PDBsum" id="3TGC"/>
<dbReference type="PDBsum" id="4GNW"/>
<dbReference type="PDBsum" id="4GRJ"/>
<dbReference type="PDBsum" id="4HPA"/>
<dbReference type="PDBsum" id="4HPB"/>
<dbReference type="PDBsum" id="4HPC"/>
<dbReference type="PDBsum" id="4HPD"/>
<dbReference type="PDBsum" id="5HWZ"/>
<dbReference type="SMR" id="Q94734"/>
<dbReference type="STRING" id="13249.Q94734"/>
<dbReference type="VEuPathDB" id="VectorBase:RPRC000023"/>
<dbReference type="HOGENOM" id="CLU_117833_0_0_1"/>
<dbReference type="InParanoid" id="Q94734"/>
<dbReference type="BRENDA" id="1.7.6.1">
    <property type="organism ID" value="5379"/>
</dbReference>
<dbReference type="EvolutionaryTrace" id="Q94734"/>
<dbReference type="Proteomes" id="UP000015103">
    <property type="component" value="Unassembled WGS sequence"/>
</dbReference>
<dbReference type="GO" id="GO:0005576">
    <property type="term" value="C:extracellular region"/>
    <property type="evidence" value="ECO:0007669"/>
    <property type="project" value="UniProtKB-SubCell"/>
</dbReference>
<dbReference type="GO" id="GO:0051381">
    <property type="term" value="F:histamine binding"/>
    <property type="evidence" value="ECO:0007669"/>
    <property type="project" value="InterPro"/>
</dbReference>
<dbReference type="GO" id="GO:0046872">
    <property type="term" value="F:metal ion binding"/>
    <property type="evidence" value="ECO:0007669"/>
    <property type="project" value="UniProtKB-KW"/>
</dbReference>
<dbReference type="GO" id="GO:0070026">
    <property type="term" value="F:nitric oxide binding"/>
    <property type="evidence" value="ECO:0007669"/>
    <property type="project" value="InterPro"/>
</dbReference>
<dbReference type="GO" id="GO:0016491">
    <property type="term" value="F:oxidoreductase activity"/>
    <property type="evidence" value="ECO:0007669"/>
    <property type="project" value="UniProtKB-KW"/>
</dbReference>
<dbReference type="GO" id="GO:0042311">
    <property type="term" value="P:vasodilation"/>
    <property type="evidence" value="ECO:0007669"/>
    <property type="project" value="UniProtKB-KW"/>
</dbReference>
<dbReference type="CDD" id="cd19456">
    <property type="entry name" value="lipocalin_NP4"/>
    <property type="match status" value="1"/>
</dbReference>
<dbReference type="Gene3D" id="2.40.128.20">
    <property type="match status" value="1"/>
</dbReference>
<dbReference type="InterPro" id="IPR012674">
    <property type="entry name" value="Calycin"/>
</dbReference>
<dbReference type="InterPro" id="IPR023613">
    <property type="entry name" value="Nitrophorin"/>
</dbReference>
<dbReference type="InterPro" id="IPR002351">
    <property type="entry name" value="Nitrophorin_domain"/>
</dbReference>
<dbReference type="Pfam" id="PF02087">
    <property type="entry name" value="Nitrophorin"/>
    <property type="match status" value="1"/>
</dbReference>
<dbReference type="PRINTS" id="PR00788">
    <property type="entry name" value="NITROPHORIN"/>
</dbReference>
<dbReference type="SUPFAM" id="SSF50814">
    <property type="entry name" value="Lipocalins"/>
    <property type="match status" value="1"/>
</dbReference>
<proteinExistence type="evidence at protein level"/>
<organism>
    <name type="scientific">Rhodnius prolixus</name>
    <name type="common">Triatomid bug</name>
    <dbReference type="NCBI Taxonomy" id="13249"/>
    <lineage>
        <taxon>Eukaryota</taxon>
        <taxon>Metazoa</taxon>
        <taxon>Ecdysozoa</taxon>
        <taxon>Arthropoda</taxon>
        <taxon>Hexapoda</taxon>
        <taxon>Insecta</taxon>
        <taxon>Pterygota</taxon>
        <taxon>Neoptera</taxon>
        <taxon>Paraneoptera</taxon>
        <taxon>Hemiptera</taxon>
        <taxon>Heteroptera</taxon>
        <taxon>Panheteroptera</taxon>
        <taxon>Cimicomorpha</taxon>
        <taxon>Reduviidae</taxon>
        <taxon>Triatominae</taxon>
        <taxon>Rhodnius</taxon>
    </lineage>
</organism>
<keyword id="KW-0002">3D-structure</keyword>
<keyword id="KW-0903">Direct protein sequencing</keyword>
<keyword id="KW-1015">Disulfide bond</keyword>
<keyword id="KW-0349">Heme</keyword>
<keyword id="KW-0408">Iron</keyword>
<keyword id="KW-0479">Metal-binding</keyword>
<keyword id="KW-0560">Oxidoreductase</keyword>
<keyword id="KW-1185">Reference proteome</keyword>
<keyword id="KW-0964">Secreted</keyword>
<keyword id="KW-0732">Signal</keyword>
<keyword id="KW-0838">Vasoactive</keyword>
<keyword id="KW-0840">Vasodilator</keyword>
<accession>Q94734</accession>
<feature type="signal peptide" evidence="16">
    <location>
        <begin position="1"/>
        <end position="21"/>
    </location>
</feature>
<feature type="chain" id="PRO_0000021826" description="Nitrophorin-4">
    <location>
        <begin position="22"/>
        <end position="205"/>
    </location>
</feature>
<feature type="binding site" description="proximal binding residue" evidence="1 2 3 7 9 11 12 14 17">
    <location>
        <position position="80"/>
    </location>
    <ligand>
        <name>heme</name>
        <dbReference type="ChEBI" id="CHEBI:30413"/>
    </ligand>
    <ligandPart>
        <name>Fe</name>
        <dbReference type="ChEBI" id="CHEBI:18248"/>
    </ligandPart>
</feature>
<feature type="disulfide bond" evidence="5 10">
    <location>
        <begin position="23"/>
        <end position="143"/>
    </location>
</feature>
<feature type="disulfide bond" evidence="5 10">
    <location>
        <begin position="62"/>
        <end position="192"/>
    </location>
</feature>
<feature type="mutagenesis site" description="Loss of NO-induced conformational change and strongly reduced pH dependence for NO release. Stabilization of the ferric-NO heme center and decreased nitrite disproportionation." evidence="4 8 12">
    <original>D</original>
    <variation>A</variation>
    <variation>N</variation>
    <location>
        <position position="51"/>
    </location>
</feature>
<feature type="mutagenesis site" description="Stabilization of the ferric-NO heme center." evidence="8">
    <original>E</original>
    <variation>Q</variation>
    <location>
        <position position="76"/>
    </location>
</feature>
<feature type="mutagenesis site" description="No effect on NO-induced conformational change or on pH dependence for NO release. Increased NO association rates." evidence="4">
    <original>T</original>
    <variation>V</variation>
    <location>
        <position position="142"/>
    </location>
</feature>
<feature type="mutagenesis site" description="Loss of NO-induced conformational change and loss of pH dependence for NO release." evidence="4">
    <original>DL</original>
    <variation>AA</variation>
    <location>
        <begin position="150"/>
        <end position="151"/>
    </location>
</feature>
<feature type="mutagenesis site" description="Coordination of the heme iron center and inhibition of nitrite disproportionation." evidence="11 12">
    <original>L</original>
    <variation>R</variation>
    <location>
        <position position="151"/>
    </location>
</feature>
<feature type="helix" evidence="21">
    <location>
        <begin position="35"/>
        <end position="38"/>
    </location>
</feature>
<feature type="strand" evidence="21">
    <location>
        <begin position="40"/>
        <end position="53"/>
    </location>
</feature>
<feature type="helix" evidence="21">
    <location>
        <begin position="54"/>
        <end position="56"/>
    </location>
</feature>
<feature type="strand" evidence="21">
    <location>
        <begin position="62"/>
        <end position="70"/>
    </location>
</feature>
<feature type="strand" evidence="21">
    <location>
        <begin position="73"/>
        <end position="81"/>
    </location>
</feature>
<feature type="turn" evidence="21">
    <location>
        <begin position="83"/>
        <end position="85"/>
    </location>
</feature>
<feature type="strand" evidence="21">
    <location>
        <begin position="88"/>
        <end position="99"/>
    </location>
</feature>
<feature type="strand" evidence="21">
    <location>
        <begin position="102"/>
        <end position="110"/>
    </location>
</feature>
<feature type="strand" evidence="21">
    <location>
        <begin position="116"/>
        <end position="118"/>
    </location>
</feature>
<feature type="strand" evidence="21">
    <location>
        <begin position="124"/>
        <end position="133"/>
    </location>
</feature>
<feature type="strand" evidence="21">
    <location>
        <begin position="135"/>
        <end position="146"/>
    </location>
</feature>
<feature type="strand" evidence="21">
    <location>
        <begin position="153"/>
        <end position="161"/>
    </location>
</feature>
<feature type="helix" evidence="21">
    <location>
        <begin position="168"/>
        <end position="176"/>
    </location>
</feature>
<feature type="helix" evidence="21">
    <location>
        <begin position="181"/>
        <end position="183"/>
    </location>
</feature>
<feature type="strand" evidence="21">
    <location>
        <begin position="184"/>
        <end position="186"/>
    </location>
</feature>
<feature type="helix" evidence="21">
    <location>
        <begin position="188"/>
        <end position="190"/>
    </location>
</feature>
<feature type="helix" evidence="21">
    <location>
        <begin position="196"/>
        <end position="202"/>
    </location>
</feature>
<protein>
    <recommendedName>
        <fullName evidence="19">Nitrophorin-4</fullName>
        <shortName evidence="19">NP4</shortName>
        <ecNumber evidence="9">1.7.6.1</ecNumber>
    </recommendedName>
    <alternativeName>
        <fullName evidence="20">Nitrite dismutase</fullName>
    </alternativeName>
</protein>
<evidence type="ECO:0000269" key="1">
    <source>
    </source>
</evidence>
<evidence type="ECO:0000269" key="2">
    <source>
    </source>
</evidence>
<evidence type="ECO:0000269" key="3">
    <source>
    </source>
</evidence>
<evidence type="ECO:0000269" key="4">
    <source>
    </source>
</evidence>
<evidence type="ECO:0000269" key="5">
    <source>
    </source>
</evidence>
<evidence type="ECO:0000269" key="6">
    <source>
    </source>
</evidence>
<evidence type="ECO:0000269" key="7">
    <source>
    </source>
</evidence>
<evidence type="ECO:0000269" key="8">
    <source>
    </source>
</evidence>
<evidence type="ECO:0000269" key="9">
    <source>
    </source>
</evidence>
<evidence type="ECO:0000269" key="10">
    <source>
    </source>
</evidence>
<evidence type="ECO:0000269" key="11">
    <source>
    </source>
</evidence>
<evidence type="ECO:0000269" key="12">
    <source>
    </source>
</evidence>
<evidence type="ECO:0000269" key="13">
    <source>
    </source>
</evidence>
<evidence type="ECO:0000269" key="14">
    <source>
    </source>
</evidence>
<evidence type="ECO:0000269" key="15">
    <source>
    </source>
</evidence>
<evidence type="ECO:0000269" key="16">
    <source>
    </source>
</evidence>
<evidence type="ECO:0000269" key="17">
    <source>
    </source>
</evidence>
<evidence type="ECO:0000303" key="18">
    <source>
    </source>
</evidence>
<evidence type="ECO:0000303" key="19">
    <source ref="1"/>
</evidence>
<evidence type="ECO:0000305" key="20"/>
<evidence type="ECO:0007829" key="21">
    <source>
        <dbReference type="PDB" id="1X8P"/>
    </source>
</evidence>
<sequence>MKSYTSLLAVAILCLFGGVNGACTKNAIAQTGFNKDKYFNGDVWYVTDYLDLEPDDVPKRYCAALAAGTASGKLKEALYHYDPKTQDTFYDVSELQVESLGKYTANFKKVDKNGNVKVAVTAGNYYTFTVMYADDSSALIHTCLHKGNKDLGDLYAVLNRNKDAAAGDKVKSAVSAATLEFSKFISTKENNCAYDNDSLKSLLTK</sequence>
<reference key="1">
    <citation type="submission" date="1996-09" db="EMBL/GenBank/DDBJ databases">
        <authorList>
            <person name="Champagne D.E."/>
            <person name="Ribeiro J.M.C."/>
        </authorList>
    </citation>
    <scope>NUCLEOTIDE SEQUENCE [MRNA]</scope>
    <source>
        <tissue>Salivary gland</tissue>
    </source>
</reference>
<reference key="2">
    <citation type="journal article" date="1995" name="J. Biol. Chem.">
        <title>Purification, partial characterization, and cloning of nitric oxide-carrying heme proteins (nitrophorins) from salivary glands of the blood-sucking insect Rhodnius prolixus.</title>
        <authorList>
            <person name="Champagne D.E."/>
            <person name="Nussenzveig R.H."/>
            <person name="Ribeiro J.M.C."/>
        </authorList>
    </citation>
    <scope>PROTEIN SEQUENCE OF 22-36</scope>
    <scope>FUNCTION</scope>
    <scope>TISSUE SPECIFICITY</scope>
    <source>
        <tissue evidence="18">Salivary gland</tissue>
    </source>
</reference>
<reference key="3">
    <citation type="journal article" date="2005" name="J. Inorg. Biochem.">
        <title>Nitric oxide interaction with insect nitrophorins and thoughts on the electron configuration of the {FeNO}6 complex.</title>
        <authorList>
            <person name="Walker F.A."/>
        </authorList>
    </citation>
    <scope>FUNCTION</scope>
</reference>
<reference key="4">
    <citation type="journal article" date="2011" name="J. Inorg. Biochem.">
        <title>Reduction of the lipocalin type heme containing protein nitrophorin -- sensitivity of the fold-stabilizing cysteine disulfides toward routine heme-iron reduction.</title>
        <authorList>
            <person name="Knipp M."/>
            <person name="Taing J.J."/>
            <person name="He C."/>
        </authorList>
    </citation>
    <scope>DISULFIDE BOND</scope>
</reference>
<reference key="5">
    <citation type="journal article" date="2012" name="PLoS Comput. Biol.">
        <title>pH-Dependent conformational changes in proteins and their effect on experimental pK(a)s: the case of Nitrophorin 4.</title>
        <authorList>
            <person name="Di Russo N.V."/>
            <person name="Estrin D.A."/>
            <person name="Marti M.A."/>
            <person name="Roitberg A.E."/>
        </authorList>
    </citation>
    <scope>FUNCTION</scope>
</reference>
<reference key="6">
    <citation type="journal article" date="2013" name="J. Phys. Chem. B">
        <title>pH-dependent picosecond structural dynamics in the distal pocket of nitrophorin 4 investigated by 2D IR spectroscopy.</title>
        <authorList>
            <person name="Cheng M."/>
            <person name="Brookes J.F."/>
            <person name="Montfort W.R."/>
            <person name="Khalil M."/>
        </authorList>
    </citation>
    <scope>FUNCTION</scope>
</reference>
<reference key="7">
    <citation type="journal article" date="1998" name="Structure">
        <title>The crystal structure of nitrophorin 4 at 1.5-A resolution: transport of nitric oxide by a lipocalin-based heme protein.</title>
        <authorList>
            <person name="Andersen J.F."/>
            <person name="Weichsel A."/>
            <person name="Balfour C.A."/>
            <person name="Champagne D.E."/>
            <person name="Montfort W.R."/>
        </authorList>
    </citation>
    <scope>X-RAY CRYSTALLOGRAPHY (1.50 ANGSTROMS) OF 22-205 IN COMPLEX WITH HEME</scope>
</reference>
<reference key="8">
    <citation type="journal article" date="2000" name="Nat. Struct. Biol.">
        <title>Nitric oxide binding to nitrophorin 4 induces complete distal pocket burial.</title>
        <authorList>
            <person name="Weichsel A."/>
            <person name="Andersen J.F."/>
            <person name="Roberts S.A."/>
            <person name="Montfort W.R."/>
        </authorList>
    </citation>
    <scope>X-RAY CRYSTALLOGRAPHY (1.40 ANGSTROMS) OF 22-205 IN COMPLEX WITH HEME AND NITRIC OXIDE</scope>
</reference>
<reference key="9">
    <citation type="journal article" date="2001" name="Biochemistry">
        <title>Ligand-induced heme ruffling and bent NO geometry in ultra-high-resolution structures of nitrophorin 4.</title>
        <authorList>
            <person name="Roberts S.A."/>
            <person name="Weichsel A."/>
            <person name="Qiu Y."/>
            <person name="Shelnutt J.A."/>
            <person name="Walker F.A."/>
            <person name="Montfort W.R."/>
        </authorList>
    </citation>
    <scope>X-RAY CRYSTALLOGRAPHY (1.08 ANGSTROMS) OF 22-205 IN COMPLEX WITH HEME; NITRIC OXIDE; AMMONIA; HISTAMINE AND IMIDAZOLE</scope>
</reference>
<reference key="10">
    <citation type="journal article" date="2004" name="Biochemistry">
        <title>Role of binding site loops in controlling nitric oxide release: structure and kinetics of mutant forms of nitrophorin 4.</title>
        <authorList>
            <person name="Maes E.M."/>
            <person name="Weichsel A."/>
            <person name="Andersen J.F."/>
            <person name="Shepley D."/>
            <person name="Montfort W.R."/>
        </authorList>
    </citation>
    <scope>FUNCTION</scope>
    <scope>X-RAY CRYSTALLOGRAPHY (1.00 ANGSTROMS) OF 22-205 IN COMPLEX WITH HEME; NITRIC OXIDE; AMMONIA AND IMIDAZOLE</scope>
    <scope>MUTAGENESIS OF ASP-51; THR-142 AND 150-ASP-LEU-151</scope>
</reference>
<reference key="11">
    <citation type="journal article" date="2004" name="Biochemistry">
        <title>Protein functional cycle viewed at atomic resolution: conformational change and mobility in nitrophorin 4 as a function of pH and NO binding.</title>
        <authorList>
            <person name="Kondrashov D.A."/>
            <person name="Roberts S.A."/>
            <person name="Weichsel A."/>
            <person name="Montfort W.R."/>
        </authorList>
    </citation>
    <scope>X-RAY CRYSTALLOGRAPHY (0.85 ANGSTROMS) OF 22-205 IN COMPLEX WITH HEME AND NITRIC OXIDE</scope>
    <scope>DISULFIDE BOND</scope>
</reference>
<reference key="12">
    <citation type="journal article" date="2004" name="J. Biol. Chem.">
        <title>Structural dynamics controls nitric oxide affinity in nitrophorin 4.</title>
        <authorList>
            <person name="Nienhaus K."/>
            <person name="Maes E.M."/>
            <person name="Weichsel A."/>
            <person name="Montfort W.R."/>
            <person name="Nienhaus G.U."/>
        </authorList>
    </citation>
    <scope>X-RAY CRYSTALLOGRAPHY (1.45 ANGSTROMS) OF 22-205 IN COMPLEX WITH HEME</scope>
</reference>
<reference key="13">
    <citation type="journal article" date="2004" name="J. Biol. Inorg. Chem.">
        <title>Axial ligand complexes of the Rhodnius nitrophorins: reduction potentials, binding constants, EPR spectra, and structures of the 4-iodopyrazole and imidazole complexes of NP4.</title>
        <authorList>
            <person name="Berry R.E."/>
            <person name="Ding X.D."/>
            <person name="Shokhireva T.K.H."/>
            <person name="Weichsel A."/>
            <person name="Montfort W.R."/>
            <person name="Walker F.A."/>
        </authorList>
    </citation>
    <scope>X-RAY CRYSTALLOGRAPHY (1.25 ANGSTROMS) OF 22-205 IN COMPLEX WITH HEME AND 4-IODOPYRAZOLE</scope>
</reference>
<reference key="14">
    <citation type="journal article" date="2005" name="Biochemistry">
        <title>Ultrahigh resolution structures of nitrophorin 4: heme distortion in ferrous CO and NO complexes.</title>
        <authorList>
            <person name="Maes E.M."/>
            <person name="Roberts S.A."/>
            <person name="Weichsel A."/>
            <person name="Montfort W.R."/>
        </authorList>
    </citation>
    <scope>X-RAY CRYSTALLOGRAPHY (0.89 ANGSTROMS) OF 22-205 IN COMPLEX WITH HEME; NITRIC OXYDE AND CARBON MONOXIDE</scope>
</reference>
<reference key="15">
    <citation type="journal article" date="2007" name="Protein Sci.">
        <title>Apo-nitrophorin 4 at atomic resolution.</title>
        <authorList>
            <person name="Amoia A.M."/>
            <person name="Montfort W.R."/>
        </authorList>
    </citation>
    <scope>X-RAY CRYSTALLOGRAPHY (1.11 ANGSTROMS) OF 22-205</scope>
</reference>
<reference key="16">
    <citation type="journal article" date="2009" name="J. Am. Chem. Soc.">
        <title>Effect of mutation of carboxyl side-chain amino acids near the heme on the midpoint potentials and ligand binding constants of nitrophorin 2 and its NO, histamine, and imidazole complexes.</title>
        <authorList>
            <person name="Berry R.E."/>
            <person name="Shokhirev M.N."/>
            <person name="Ho A.Y."/>
            <person name="Yang F."/>
            <person name="Shokhireva T.K."/>
            <person name="Zhang H."/>
            <person name="Weichsel A."/>
            <person name="Montfort W.R."/>
            <person name="Walker F.A."/>
        </authorList>
    </citation>
    <scope>X-RAY CRYSTALLOGRAPHY (1.50 ANGSTROMS) OF 22-205 IN COMPLEX WITH HEME AND NITRIC OXYDE</scope>
    <scope>MUTAGENESIS OF ASP-51 AND GLU-76</scope>
</reference>
<reference key="17">
    <citation type="journal article" date="2010" name="Biochemistry">
        <title>Formation of the complex of nitrite with the ferriheme b beta-barrel proteins nitrophorin 4 and nitrophorin 7.</title>
        <authorList>
            <person name="He C."/>
            <person name="Ogata H."/>
            <person name="Knipp M."/>
        </authorList>
    </citation>
    <scope>X-RAY CRYSTALLOGRAPHY (1.40 ANGSTROMS) OF 22-205 IN COMPLEX WITH HEME AND NITRITE</scope>
    <scope>FUNCTION</scope>
    <scope>CATALYTIC ACTIVITY</scope>
    <scope>COFACTOR</scope>
</reference>
<reference key="18">
    <citation type="journal article" date="2012" name="Angew. Chem. Int. Ed. Engl.">
        <title>Guanidine-ferroheme coordination in the mutant protein nitrophorin 4(L130R).</title>
        <authorList>
            <person name="He C."/>
            <person name="Fuchs M.R."/>
            <person name="Ogata H."/>
            <person name="Knipp M."/>
        </authorList>
    </citation>
    <scope>X-RAY CRYSTALLOGRAPHY (1.30 ANGSTROMS) OF 22-205 IN COMPLEX WITH HEME</scope>
    <scope>MUTAGENESIS OF LEU-151</scope>
</reference>
<reference key="19">
    <citation type="journal article" date="2012" name="Chem. Biodivers.">
        <title>Insertion of an H-bonding residue into the distal pocket of the ferriheme protein nitrophorin 4: effect on nitrite-iron coordination and nitrite disproportionation.</title>
        <authorList>
            <person name="He C."/>
            <person name="Ogata H."/>
            <person name="Knipp M."/>
        </authorList>
    </citation>
    <scope>X-RAY CRYSTALLOGRAPHY (1.40 ANGSTROMS) OF 22-205 IN COMPLEX WITH HEME AND NITRITE</scope>
    <scope>MUTAGENESIS OF ASP-51 AND LEU-151</scope>
</reference>
<reference key="20">
    <citation type="journal article" date="2013" name="J. Inorg. Biochem.">
        <title>Complexes of ferriheme nitrophorin 4 with low-molecular weight thiol(ate)s occurring in blood plasma.</title>
        <authorList>
            <person name="He C."/>
            <person name="Nishikawa K."/>
            <person name="Erdem O.F."/>
            <person name="Reijerse E."/>
            <person name="Ogata H."/>
            <person name="Lubitz W."/>
            <person name="Knipp M."/>
        </authorList>
    </citation>
    <scope>X-RAY CRYSTALLOGRAPHY (1.30 ANGSTROMS) OF 22-205 IN COMPLEX WITH HEME; L-CYSTEINE AND L-HOMOCYSTEINE</scope>
</reference>
<comment type="function">
    <text evidence="4 6 9 13 15 16">Heme-based protein that delivers nitric oxide gas (NO) to the victim while feeding, resulting in vasodilation and inhibition of platelet aggregation. Reversibly binds nitric oxide (NO) (PubMed:7721773). Also binds tightly to histamine, which is released by the host to induce wound healing. NO release is pH dependent and linked to loop dynamics.</text>
</comment>
<comment type="catalytic activity">
    <reaction evidence="9">
        <text>3 nitrite + 2 H(+) = 2 nitric oxide + nitrate + H2O</text>
        <dbReference type="Rhea" id="RHEA:31367"/>
        <dbReference type="ChEBI" id="CHEBI:15377"/>
        <dbReference type="ChEBI" id="CHEBI:15378"/>
        <dbReference type="ChEBI" id="CHEBI:16301"/>
        <dbReference type="ChEBI" id="CHEBI:16480"/>
        <dbReference type="ChEBI" id="CHEBI:17632"/>
        <dbReference type="EC" id="1.7.6.1"/>
    </reaction>
</comment>
<comment type="cofactor">
    <cofactor evidence="9">
        <name>heme b</name>
        <dbReference type="ChEBI" id="CHEBI:60344"/>
    </cofactor>
    <text evidence="9">Binds 1 heme b (iron(II)-protoporphyrin IX) group per subunit.</text>
</comment>
<comment type="subcellular location">
    <subcellularLocation>
        <location>Secreted</location>
    </subcellularLocation>
</comment>
<comment type="tissue specificity">
    <text evidence="16">Salivary gland (at protein level).</text>
</comment>
<comment type="miscellaneous">
    <text evidence="1 2 4 5 12">Superposition of the structures of NP4 in the presence of ammonia or nitrite shows a conformational change of the protein upon NO(2)(-) binding.</text>
</comment>
<comment type="similarity">
    <text evidence="20">Belongs to the calycin superfamily. Nitrophorin family.</text>
</comment>